<protein>
    <recommendedName>
        <fullName>P840 reaction center 17 kDa protein</fullName>
    </recommendedName>
</protein>
<organism>
    <name type="scientific">Chlorobaculum tepidum (strain ATCC 49652 / DSM 12025 / NBRC 103806 / TLS)</name>
    <name type="common">Chlorobium tepidum</name>
    <dbReference type="NCBI Taxonomy" id="194439"/>
    <lineage>
        <taxon>Bacteria</taxon>
        <taxon>Pseudomonadati</taxon>
        <taxon>Chlorobiota</taxon>
        <taxon>Chlorobiia</taxon>
        <taxon>Chlorobiales</taxon>
        <taxon>Chlorobiaceae</taxon>
        <taxon>Chlorobaculum</taxon>
    </lineage>
</organism>
<comment type="subunit">
    <text>Component of the P840 reaction center.</text>
</comment>
<gene>
    <name type="primary">pscD</name>
    <name type="ordered locus">CT0641</name>
</gene>
<evidence type="ECO:0000256" key="1">
    <source>
        <dbReference type="SAM" id="MobiDB-lite"/>
    </source>
</evidence>
<evidence type="ECO:0007829" key="2">
    <source>
        <dbReference type="PDB" id="6M32"/>
    </source>
</evidence>
<evidence type="ECO:0007829" key="3">
    <source>
        <dbReference type="PDB" id="7UEA"/>
    </source>
</evidence>
<accession>Q8KEP5</accession>
<keyword id="KW-0002">3D-structure</keyword>
<keyword id="KW-0249">Electron transport</keyword>
<keyword id="KW-0602">Photosynthesis</keyword>
<keyword id="KW-0674">Reaction center</keyword>
<keyword id="KW-1185">Reference proteome</keyword>
<keyword id="KW-0813">Transport</keyword>
<proteinExistence type="evidence at protein level"/>
<dbReference type="EMBL" id="AE006470">
    <property type="protein sequence ID" value="AAM71880.1"/>
    <property type="molecule type" value="Genomic_DNA"/>
</dbReference>
<dbReference type="RefSeq" id="NP_661538.1">
    <property type="nucleotide sequence ID" value="NC_002932.3"/>
</dbReference>
<dbReference type="RefSeq" id="WP_010932325.1">
    <property type="nucleotide sequence ID" value="NC_002932.3"/>
</dbReference>
<dbReference type="PDB" id="6M32">
    <property type="method" value="EM"/>
    <property type="resolution" value="2.70 A"/>
    <property type="chains" value="D=1-143"/>
</dbReference>
<dbReference type="PDB" id="7UEA">
    <property type="method" value="EM"/>
    <property type="resolution" value="3.49 A"/>
    <property type="chains" value="D=1-143"/>
</dbReference>
<dbReference type="PDB" id="7UEB">
    <property type="method" value="EM"/>
    <property type="resolution" value="3.08 A"/>
    <property type="chains" value="D=1-143"/>
</dbReference>
<dbReference type="PDB" id="7Z6Q">
    <property type="method" value="EM"/>
    <property type="resolution" value="2.50 A"/>
    <property type="chains" value="D=1-143"/>
</dbReference>
<dbReference type="PDB" id="8GWA">
    <property type="method" value="EM"/>
    <property type="resolution" value="2.90 A"/>
    <property type="chains" value="D=1-143"/>
</dbReference>
<dbReference type="PDBsum" id="6M32"/>
<dbReference type="PDBsum" id="7UEA"/>
<dbReference type="PDBsum" id="7UEB"/>
<dbReference type="PDBsum" id="7Z6Q"/>
<dbReference type="PDBsum" id="8GWA"/>
<dbReference type="EMDB" id="EMD-14528"/>
<dbReference type="EMDB" id="EMD-26469"/>
<dbReference type="EMDB" id="EMD-26471"/>
<dbReference type="EMDB" id="EMD-30069"/>
<dbReference type="EMDB" id="EMD-34307"/>
<dbReference type="SMR" id="Q8KEP5"/>
<dbReference type="IntAct" id="Q8KEP5">
    <property type="interactions" value="1"/>
</dbReference>
<dbReference type="STRING" id="194439.CT0641"/>
<dbReference type="EnsemblBacteria" id="AAM71880">
    <property type="protein sequence ID" value="AAM71880"/>
    <property type="gene ID" value="CT0641"/>
</dbReference>
<dbReference type="KEGG" id="cte:CT0641"/>
<dbReference type="PATRIC" id="fig|194439.7.peg.597"/>
<dbReference type="eggNOG" id="ENOG50338QS">
    <property type="taxonomic scope" value="Bacteria"/>
</dbReference>
<dbReference type="HOGENOM" id="CLU_139020_0_0_10"/>
<dbReference type="OrthoDB" id="594876at2"/>
<dbReference type="Proteomes" id="UP000001007">
    <property type="component" value="Chromosome"/>
</dbReference>
<dbReference type="GO" id="GO:0015979">
    <property type="term" value="P:photosynthesis"/>
    <property type="evidence" value="ECO:0007669"/>
    <property type="project" value="UniProtKB-KW"/>
</dbReference>
<dbReference type="InterPro" id="IPR019608">
    <property type="entry name" value="PSI_P840_PscD"/>
</dbReference>
<dbReference type="Pfam" id="PF10657">
    <property type="entry name" value="RC-P840_PscD"/>
    <property type="match status" value="1"/>
</dbReference>
<name>PSCD_CHLTE</name>
<feature type="chain" id="PRO_0000097065" description="P840 reaction center 17 kDa protein">
    <location>
        <begin position="1"/>
        <end position="143"/>
    </location>
</feature>
<feature type="region of interest" description="Disordered" evidence="1">
    <location>
        <begin position="1"/>
        <end position="24"/>
    </location>
</feature>
<feature type="compositionally biased region" description="Polar residues" evidence="1">
    <location>
        <begin position="1"/>
        <end position="15"/>
    </location>
</feature>
<feature type="strand" evidence="2">
    <location>
        <begin position="30"/>
        <end position="36"/>
    </location>
</feature>
<feature type="strand" evidence="2">
    <location>
        <begin position="42"/>
        <end position="46"/>
    </location>
</feature>
<feature type="strand" evidence="2">
    <location>
        <begin position="51"/>
        <end position="55"/>
    </location>
</feature>
<feature type="helix" evidence="2">
    <location>
        <begin position="64"/>
        <end position="71"/>
    </location>
</feature>
<feature type="strand" evidence="2">
    <location>
        <begin position="74"/>
        <end position="78"/>
    </location>
</feature>
<feature type="strand" evidence="3">
    <location>
        <begin position="81"/>
        <end position="84"/>
    </location>
</feature>
<feature type="turn" evidence="2">
    <location>
        <begin position="89"/>
        <end position="92"/>
    </location>
</feature>
<feature type="strand" evidence="3">
    <location>
        <begin position="96"/>
        <end position="98"/>
    </location>
</feature>
<feature type="strand" evidence="2">
    <location>
        <begin position="103"/>
        <end position="106"/>
    </location>
</feature>
<feature type="turn" evidence="3">
    <location>
        <begin position="116"/>
        <end position="118"/>
    </location>
</feature>
<reference key="1">
    <citation type="journal article" date="2002" name="Proc. Natl. Acad. Sci. U.S.A.">
        <title>The complete genome sequence of Chlorobium tepidum TLS, a photosynthetic, anaerobic, green-sulfur bacterium.</title>
        <authorList>
            <person name="Eisen J.A."/>
            <person name="Nelson K.E."/>
            <person name="Paulsen I.T."/>
            <person name="Heidelberg J.F."/>
            <person name="Wu M."/>
            <person name="Dodson R.J."/>
            <person name="DeBoy R.T."/>
            <person name="Gwinn M.L."/>
            <person name="Nelson W.C."/>
            <person name="Haft D.H."/>
            <person name="Hickey E.K."/>
            <person name="Peterson J.D."/>
            <person name="Durkin A.S."/>
            <person name="Kolonay J.F."/>
            <person name="Yang F."/>
            <person name="Holt I.E."/>
            <person name="Umayam L.A."/>
            <person name="Mason T.M."/>
            <person name="Brenner M."/>
            <person name="Shea T.P."/>
            <person name="Parksey D.S."/>
            <person name="Nierman W.C."/>
            <person name="Feldblyum T.V."/>
            <person name="Hansen C.L."/>
            <person name="Craven M.B."/>
            <person name="Radune D."/>
            <person name="Vamathevan J.J."/>
            <person name="Khouri H.M."/>
            <person name="White O."/>
            <person name="Gruber T.M."/>
            <person name="Ketchum K.A."/>
            <person name="Venter J.C."/>
            <person name="Tettelin H."/>
            <person name="Bryant D.A."/>
            <person name="Fraser C.M."/>
        </authorList>
    </citation>
    <scope>NUCLEOTIDE SEQUENCE [LARGE SCALE GENOMIC DNA]</scope>
    <source>
        <strain>ATCC 49652 / DSM 12025 / NBRC 103806 / TLS</strain>
    </source>
</reference>
<sequence length="143" mass="16607">MQPQLSRPQTASNQVRKAVSGPWSGNAVHKAEKYFITSAKRDRDGKLQIELVPASGRRKLSPTPEMIRRLIDGEIEIYILTTQPDIAIDMNKEIIDMENRYVIDFDKRGVKWTMREIPVFYHEGKGLCVELHNKIYTLDQFFK</sequence>